<sequence>MGNTCGVTLRSKYFASFRGASQRHDEAGYAPVATSAAAAAAADEPAGKKAPRGSAAAADAPHAASMKRGAPAPAELTANVLGHPTPSLSEHYALGRKLGQGQFGTTYLCTDLATGVDYACKSIAKRKLITKEDVEDVRREIQIMHHLAGHRNVVAIKGAYEDPQYVHIVMELCAGGELFDRIIERGQFSERKAAELTRIIVGVIEACHSLGVIHRDLKPENFLLANKDDDLSLKAIDFGLSVFFKPGQVFTDVVGSPYYVAPEVLRKCYGPEADVWTAGVILYILLSGVPPFWAETQQGIFDAVLKGVIDFDSDPWPVISDSAKDLIRRMLNPRPKERLTAHEVLCHPWICDHGVAPDRPLDPAVLSRIKQFSAMNKLKKMALRVIAESLSEEEIAGLKEMFKAMDTDNSGAITYDELKEGMRKYGSTLKDTEIRDLMEAADVDNSGTIDYIEFIAATLHLNKLEREEHLVAAFSYFDKDGSGYITVDELQQACKEHNMPDAFLDDVIKEADQDNDGRIDYGEFVAMMTKGNMGVGRRTMRNSLNISMR</sequence>
<organism>
    <name type="scientific">Oryza sativa subsp. japonica</name>
    <name type="common">Rice</name>
    <dbReference type="NCBI Taxonomy" id="39947"/>
    <lineage>
        <taxon>Eukaryota</taxon>
        <taxon>Viridiplantae</taxon>
        <taxon>Streptophyta</taxon>
        <taxon>Embryophyta</taxon>
        <taxon>Tracheophyta</taxon>
        <taxon>Spermatophyta</taxon>
        <taxon>Magnoliopsida</taxon>
        <taxon>Liliopsida</taxon>
        <taxon>Poales</taxon>
        <taxon>Poaceae</taxon>
        <taxon>BOP clade</taxon>
        <taxon>Oryzoideae</taxon>
        <taxon>Oryzeae</taxon>
        <taxon>Oryzinae</taxon>
        <taxon>Oryza</taxon>
        <taxon>Oryza sativa</taxon>
    </lineage>
</organism>
<name>CDPK5_ORYSJ</name>
<proteinExistence type="inferred from homology"/>
<evidence type="ECO:0000250" key="1">
    <source>
        <dbReference type="UniProtKB" id="Q06850"/>
    </source>
</evidence>
<evidence type="ECO:0000255" key="2"/>
<evidence type="ECO:0000255" key="3">
    <source>
        <dbReference type="PROSITE-ProRule" id="PRU00159"/>
    </source>
</evidence>
<evidence type="ECO:0000255" key="4">
    <source>
        <dbReference type="PROSITE-ProRule" id="PRU00448"/>
    </source>
</evidence>
<evidence type="ECO:0000256" key="5">
    <source>
        <dbReference type="SAM" id="MobiDB-lite"/>
    </source>
</evidence>
<evidence type="ECO:0000303" key="6">
    <source>
    </source>
</evidence>
<evidence type="ECO:0000305" key="7"/>
<evidence type="ECO:0000312" key="8">
    <source>
        <dbReference type="EMBL" id="BAF09681.1"/>
    </source>
</evidence>
<gene>
    <name evidence="6" type="primary">CPK5</name>
    <name evidence="8" type="ordered locus">Os02g0685900</name>
    <name evidence="7" type="ordered locus">LOC_Os02g46090</name>
</gene>
<accession>Q0DYK7</accession>
<protein>
    <recommendedName>
        <fullName evidence="7">Calcium-dependent protein kinase 5</fullName>
        <shortName evidence="7">OsCDPK5</shortName>
        <shortName evidence="6">OsCPK5</shortName>
        <ecNumber evidence="7">2.7.11.1</ecNumber>
    </recommendedName>
</protein>
<dbReference type="EC" id="2.7.11.1" evidence="7"/>
<dbReference type="EMBL" id="AP004071">
    <property type="status" value="NOT_ANNOTATED_CDS"/>
    <property type="molecule type" value="Genomic_DNA"/>
</dbReference>
<dbReference type="EMBL" id="AP008208">
    <property type="protein sequence ID" value="BAF09681.1"/>
    <property type="molecule type" value="Genomic_DNA"/>
</dbReference>
<dbReference type="EMBL" id="AP014958">
    <property type="protein sequence ID" value="BAS80334.1"/>
    <property type="molecule type" value="Genomic_DNA"/>
</dbReference>
<dbReference type="RefSeq" id="XP_015625261.1">
    <property type="nucleotide sequence ID" value="XM_015769775.1"/>
</dbReference>
<dbReference type="SMR" id="Q0DYK7"/>
<dbReference type="FunCoup" id="Q0DYK7">
    <property type="interactions" value="2292"/>
</dbReference>
<dbReference type="STRING" id="39947.Q0DYK7"/>
<dbReference type="PaxDb" id="39947-Q0DYK7"/>
<dbReference type="EnsemblPlants" id="Os02t0685900-00">
    <property type="protein sequence ID" value="Os02t0685900-00"/>
    <property type="gene ID" value="Os02g0685900"/>
</dbReference>
<dbReference type="Gramene" id="Os02t0685900-00">
    <property type="protein sequence ID" value="Os02t0685900-00"/>
    <property type="gene ID" value="Os02g0685900"/>
</dbReference>
<dbReference type="KEGG" id="dosa:Os02g0685900"/>
<dbReference type="eggNOG" id="KOG0032">
    <property type="taxonomic scope" value="Eukaryota"/>
</dbReference>
<dbReference type="HOGENOM" id="CLU_000288_37_4_1"/>
<dbReference type="InParanoid" id="Q0DYK7"/>
<dbReference type="OMA" id="WAHISED"/>
<dbReference type="OrthoDB" id="40902at2759"/>
<dbReference type="PlantReactome" id="R-ADU-9607185">
    <property type="pathway name" value="Generation of superoxide radicals"/>
</dbReference>
<dbReference type="PlantReactome" id="R-AHA-9607185">
    <property type="pathway name" value="Generation of superoxide radicals"/>
</dbReference>
<dbReference type="PlantReactome" id="R-AIP-9607185">
    <property type="pathway name" value="Generation of superoxide radicals"/>
</dbReference>
<dbReference type="PlantReactome" id="R-ALY-9607185">
    <property type="pathway name" value="Generation of superoxide radicals"/>
</dbReference>
<dbReference type="PlantReactome" id="R-ATA-9607185">
    <property type="pathway name" value="Generation of superoxide radicals"/>
</dbReference>
<dbReference type="PlantReactome" id="R-ATH-9607185">
    <property type="pathway name" value="Generation of superoxide radicals"/>
</dbReference>
<dbReference type="PlantReactome" id="R-BDI-9607185">
    <property type="pathway name" value="Generation of superoxide radicals"/>
</dbReference>
<dbReference type="PlantReactome" id="R-BJU-9607185">
    <property type="pathway name" value="Generation of superoxide radicals"/>
</dbReference>
<dbReference type="PlantReactome" id="R-BNA-9607185">
    <property type="pathway name" value="Generation of superoxide radicals"/>
</dbReference>
<dbReference type="PlantReactome" id="R-BOL-9607185">
    <property type="pathway name" value="Generation of superoxide radicals"/>
</dbReference>
<dbReference type="PlantReactome" id="R-BRA-9607185">
    <property type="pathway name" value="Generation of superoxide radicals"/>
</dbReference>
<dbReference type="PlantReactome" id="R-BVU-9607185">
    <property type="pathway name" value="Generation of superoxide radicals"/>
</dbReference>
<dbReference type="PlantReactome" id="R-CAN-9607185">
    <property type="pathway name" value="Generation of superoxide radicals"/>
</dbReference>
<dbReference type="PlantReactome" id="R-CAR-9607185">
    <property type="pathway name" value="Generation of superoxide radicals"/>
</dbReference>
<dbReference type="PlantReactome" id="R-CCA-9607185">
    <property type="pathway name" value="Generation of superoxide radicals"/>
</dbReference>
<dbReference type="PlantReactome" id="R-CCI-9607185">
    <property type="pathway name" value="Generation of superoxide radicals"/>
</dbReference>
<dbReference type="PlantReactome" id="R-CCL-9607185">
    <property type="pathway name" value="Generation of superoxide radicals"/>
</dbReference>
<dbReference type="PlantReactome" id="R-CCN-9607185">
    <property type="pathway name" value="Generation of superoxide radicals"/>
</dbReference>
<dbReference type="PlantReactome" id="R-CCP-9607185">
    <property type="pathway name" value="Generation of superoxide radicals"/>
</dbReference>
<dbReference type="PlantReactome" id="R-CLA-9607185">
    <property type="pathway name" value="Generation of superoxide radicals"/>
</dbReference>
<dbReference type="PlantReactome" id="R-CML-9607185">
    <property type="pathway name" value="Generation of superoxide radicals"/>
</dbReference>
<dbReference type="PlantReactome" id="R-COL-9607185">
    <property type="pathway name" value="Generation of superoxide radicals"/>
</dbReference>
<dbReference type="PlantReactome" id="R-CQI-9607185">
    <property type="pathway name" value="Generation of superoxide radicals"/>
</dbReference>
<dbReference type="PlantReactome" id="R-CRU-9607185">
    <property type="pathway name" value="Generation of superoxide radicals"/>
</dbReference>
<dbReference type="PlantReactome" id="R-CSA-9607185">
    <property type="pathway name" value="Generation of superoxide radicals"/>
</dbReference>
<dbReference type="PlantReactome" id="R-CSC-9607185">
    <property type="pathway name" value="Generation of superoxide radicals"/>
</dbReference>
<dbReference type="PlantReactome" id="R-CSI-9607185">
    <property type="pathway name" value="Generation of superoxide radicals"/>
</dbReference>
<dbReference type="PlantReactome" id="R-CSK-9607185">
    <property type="pathway name" value="Generation of superoxide radicals"/>
</dbReference>
<dbReference type="PlantReactome" id="R-CST-9607185">
    <property type="pathway name" value="Generation of superoxide radicals"/>
</dbReference>
<dbReference type="PlantReactome" id="R-DCA-9607185">
    <property type="pathway name" value="Generation of superoxide radicals"/>
</dbReference>
<dbReference type="PlantReactome" id="R-DEX-9607185">
    <property type="pathway name" value="Generation of superoxide radicals"/>
</dbReference>
<dbReference type="PlantReactome" id="R-ECU-9607185">
    <property type="pathway name" value="Generation of superoxide radicals"/>
</dbReference>
<dbReference type="PlantReactome" id="R-EGR-9607185">
    <property type="pathway name" value="Generation of superoxide radicals"/>
</dbReference>
<dbReference type="PlantReactome" id="R-FCR-9607185">
    <property type="pathway name" value="Generation of superoxide radicals"/>
</dbReference>
<dbReference type="PlantReactome" id="R-FVE-9607185">
    <property type="pathway name" value="Generation of superoxide radicals"/>
</dbReference>
<dbReference type="PlantReactome" id="R-GMA-9607185">
    <property type="pathway name" value="Generation of superoxide radicals"/>
</dbReference>
<dbReference type="PlantReactome" id="R-GRA-9607185">
    <property type="pathway name" value="Generation of superoxide radicals"/>
</dbReference>
<dbReference type="PlantReactome" id="R-HLP-9607185">
    <property type="pathway name" value="Generation of superoxide radicals"/>
</dbReference>
<dbReference type="PlantReactome" id="R-HVU-9607185">
    <property type="pathway name" value="Generation of superoxide radicals"/>
</dbReference>
<dbReference type="PlantReactome" id="R-ITR-9607185">
    <property type="pathway name" value="Generation of superoxide radicals"/>
</dbReference>
<dbReference type="PlantReactome" id="R-JCU-9607185">
    <property type="pathway name" value="Generation of superoxide radicals"/>
</dbReference>
<dbReference type="PlantReactome" id="R-JRE-9607185">
    <property type="pathway name" value="Generation of superoxide radicals"/>
</dbReference>
<dbReference type="PlantReactome" id="R-LAN-9607185">
    <property type="pathway name" value="Generation of superoxide radicals"/>
</dbReference>
<dbReference type="PlantReactome" id="R-LPE-9607185">
    <property type="pathway name" value="Generation of superoxide radicals"/>
</dbReference>
<dbReference type="PlantReactome" id="R-LPR-9607185">
    <property type="pathway name" value="Generation of superoxide radicals"/>
</dbReference>
<dbReference type="PlantReactome" id="R-MAC-9607185">
    <property type="pathway name" value="Generation of superoxide radicals"/>
</dbReference>
<dbReference type="PlantReactome" id="R-MES-9607185">
    <property type="pathway name" value="Generation of superoxide radicals"/>
</dbReference>
<dbReference type="PlantReactome" id="R-MGU-9607185">
    <property type="pathway name" value="Generation of superoxide radicals"/>
</dbReference>
<dbReference type="PlantReactome" id="R-MTR-9607185">
    <property type="pathway name" value="Generation of superoxide radicals"/>
</dbReference>
<dbReference type="PlantReactome" id="R-NAT-9607185">
    <property type="pathway name" value="Generation of superoxide radicals"/>
</dbReference>
<dbReference type="PlantReactome" id="R-NNU-9607185">
    <property type="pathway name" value="Generation of superoxide radicals"/>
</dbReference>
<dbReference type="PlantReactome" id="R-OAU-9607185">
    <property type="pathway name" value="Generation of superoxide radicals"/>
</dbReference>
<dbReference type="PlantReactome" id="R-OBA-9607185">
    <property type="pathway name" value="Generation of superoxide radicals"/>
</dbReference>
<dbReference type="PlantReactome" id="R-OBR-9607185">
    <property type="pathway name" value="Generation of superoxide radicals"/>
</dbReference>
<dbReference type="PlantReactome" id="R-OGL-9607185">
    <property type="pathway name" value="Generation of superoxide radicals"/>
</dbReference>
<dbReference type="PlantReactome" id="R-OGR-9607185">
    <property type="pathway name" value="Generation of superoxide radicals"/>
</dbReference>
<dbReference type="PlantReactome" id="R-OGU-9607185">
    <property type="pathway name" value="Generation of superoxide radicals"/>
</dbReference>
<dbReference type="PlantReactome" id="R-OLO-9607185">
    <property type="pathway name" value="Generation of superoxide radicals"/>
</dbReference>
<dbReference type="PlantReactome" id="R-OME-9607185">
    <property type="pathway name" value="Generation of superoxide radicals"/>
</dbReference>
<dbReference type="PlantReactome" id="R-OMI-9607185">
    <property type="pathway name" value="Generation of superoxide radicals"/>
</dbReference>
<dbReference type="PlantReactome" id="R-ONI-9607185">
    <property type="pathway name" value="Generation of superoxide radicals"/>
</dbReference>
<dbReference type="PlantReactome" id="R-OOF-9607185">
    <property type="pathway name" value="Generation of superoxide radicals"/>
</dbReference>
<dbReference type="PlantReactome" id="R-OPU-9607185">
    <property type="pathway name" value="Generation of superoxide radicals"/>
</dbReference>
<dbReference type="PlantReactome" id="R-ORU-9607185">
    <property type="pathway name" value="Generation of superoxide radicals"/>
</dbReference>
<dbReference type="PlantReactome" id="R-OSA-3899351">
    <property type="pathway name" value="Abscisic acid (ABA) mediated signaling"/>
</dbReference>
<dbReference type="PlantReactome" id="R-OSA-9607185">
    <property type="pathway name" value="Generation of superoxide radicals"/>
</dbReference>
<dbReference type="PlantReactome" id="R-OSI-9607185">
    <property type="pathway name" value="Generation of superoxide radicals"/>
</dbReference>
<dbReference type="PlantReactome" id="R-PAB-9607185">
    <property type="pathway name" value="Generation of superoxide radicals"/>
</dbReference>
<dbReference type="PlantReactome" id="R-PAV-9607185">
    <property type="pathway name" value="Generation of superoxide radicals"/>
</dbReference>
<dbReference type="PlantReactome" id="R-PDA-9607185">
    <property type="pathway name" value="Generation of superoxide radicals"/>
</dbReference>
<dbReference type="PlantReactome" id="R-PED-9607185">
    <property type="pathway name" value="Generation of superoxide radicals"/>
</dbReference>
<dbReference type="PlantReactome" id="R-PHA-9607185">
    <property type="pathway name" value="Generation of superoxide radicals"/>
</dbReference>
<dbReference type="PlantReactome" id="R-PHH-9607185">
    <property type="pathway name" value="Generation of superoxide radicals"/>
</dbReference>
<dbReference type="PlantReactome" id="R-PPE-9607185">
    <property type="pathway name" value="Generation of superoxide radicals"/>
</dbReference>
<dbReference type="PlantReactome" id="R-PSA-9607185">
    <property type="pathway name" value="Generation of superoxide radicals"/>
</dbReference>
<dbReference type="PlantReactome" id="R-PTA-9607185">
    <property type="pathway name" value="Generation of superoxide radicals"/>
</dbReference>
<dbReference type="PlantReactome" id="R-PTI-9607185">
    <property type="pathway name" value="Generation of superoxide radicals"/>
</dbReference>
<dbReference type="PlantReactome" id="R-PVE-9607185">
    <property type="pathway name" value="Generation of superoxide radicals"/>
</dbReference>
<dbReference type="PlantReactome" id="R-PVU-9607185">
    <property type="pathway name" value="Generation of superoxide radicals"/>
</dbReference>
<dbReference type="PlantReactome" id="R-QLO-9607185">
    <property type="pathway name" value="Generation of superoxide radicals"/>
</dbReference>
<dbReference type="PlantReactome" id="R-QSU-9607185">
    <property type="pathway name" value="Generation of superoxide radicals"/>
</dbReference>
<dbReference type="PlantReactome" id="R-RCH-9607185">
    <property type="pathway name" value="Generation of superoxide radicals"/>
</dbReference>
<dbReference type="PlantReactome" id="R-SBI-9607185">
    <property type="pathway name" value="Generation of superoxide radicals"/>
</dbReference>
<dbReference type="PlantReactome" id="R-SCR-9607185">
    <property type="pathway name" value="Generation of superoxide radicals"/>
</dbReference>
<dbReference type="PlantReactome" id="R-SHI-9607185">
    <property type="pathway name" value="Generation of superoxide radicals"/>
</dbReference>
<dbReference type="PlantReactome" id="R-SIT-9607185">
    <property type="pathway name" value="Generation of superoxide radicals"/>
</dbReference>
<dbReference type="PlantReactome" id="R-SLY-9607185">
    <property type="pathway name" value="Generation of superoxide radicals"/>
</dbReference>
<dbReference type="PlantReactome" id="R-STU-9607185">
    <property type="pathway name" value="Generation of superoxide radicals"/>
</dbReference>
<dbReference type="PlantReactome" id="R-SVI-9607185">
    <property type="pathway name" value="Generation of superoxide radicals"/>
</dbReference>
<dbReference type="PlantReactome" id="R-TAE-9607185">
    <property type="pathway name" value="Generation of superoxide radicals"/>
</dbReference>
<dbReference type="PlantReactome" id="R-TCA-9607185">
    <property type="pathway name" value="Generation of superoxide radicals"/>
</dbReference>
<dbReference type="PlantReactome" id="R-TDI-9607185">
    <property type="pathway name" value="Generation of superoxide radicals"/>
</dbReference>
<dbReference type="PlantReactome" id="R-TPR-9607185">
    <property type="pathway name" value="Generation of superoxide radicals"/>
</dbReference>
<dbReference type="PlantReactome" id="R-TTU-9607185">
    <property type="pathway name" value="Generation of superoxide radicals"/>
</dbReference>
<dbReference type="PlantReactome" id="R-TUR-9607185">
    <property type="pathway name" value="Generation of superoxide radicals"/>
</dbReference>
<dbReference type="PlantReactome" id="R-VAN-9607185">
    <property type="pathway name" value="Generation of superoxide radicals"/>
</dbReference>
<dbReference type="PlantReactome" id="R-VRA-9607185">
    <property type="pathway name" value="Generation of superoxide radicals"/>
</dbReference>
<dbReference type="PlantReactome" id="R-VUN-9607185">
    <property type="pathway name" value="Generation of superoxide radicals"/>
</dbReference>
<dbReference type="PlantReactome" id="R-VVN-9607185">
    <property type="pathway name" value="Generation of superoxide radicals"/>
</dbReference>
<dbReference type="PlantReactome" id="R-ZJA-9607185">
    <property type="pathway name" value="Generation of superoxide radicals"/>
</dbReference>
<dbReference type="PlantReactome" id="R-ZMA-9607185">
    <property type="pathway name" value="Generation of superoxide radicals"/>
</dbReference>
<dbReference type="PlantReactome" id="R-ZMY-9607185">
    <property type="pathway name" value="Generation of superoxide radicals"/>
</dbReference>
<dbReference type="Proteomes" id="UP000000763">
    <property type="component" value="Chromosome 2"/>
</dbReference>
<dbReference type="Proteomes" id="UP000059680">
    <property type="component" value="Chromosome 2"/>
</dbReference>
<dbReference type="GO" id="GO:0005737">
    <property type="term" value="C:cytoplasm"/>
    <property type="evidence" value="ECO:0000318"/>
    <property type="project" value="GO_Central"/>
</dbReference>
<dbReference type="GO" id="GO:0016020">
    <property type="term" value="C:membrane"/>
    <property type="evidence" value="ECO:0007669"/>
    <property type="project" value="UniProtKB-SubCell"/>
</dbReference>
<dbReference type="GO" id="GO:0005634">
    <property type="term" value="C:nucleus"/>
    <property type="evidence" value="ECO:0000318"/>
    <property type="project" value="GO_Central"/>
</dbReference>
<dbReference type="GO" id="GO:0005524">
    <property type="term" value="F:ATP binding"/>
    <property type="evidence" value="ECO:0007669"/>
    <property type="project" value="UniProtKB-KW"/>
</dbReference>
<dbReference type="GO" id="GO:0005509">
    <property type="term" value="F:calcium ion binding"/>
    <property type="evidence" value="ECO:0007669"/>
    <property type="project" value="InterPro"/>
</dbReference>
<dbReference type="GO" id="GO:0009931">
    <property type="term" value="F:calcium-dependent protein serine/threonine kinase activity"/>
    <property type="evidence" value="ECO:0000318"/>
    <property type="project" value="GO_Central"/>
</dbReference>
<dbReference type="GO" id="GO:0004683">
    <property type="term" value="F:calcium/calmodulin-dependent protein kinase activity"/>
    <property type="evidence" value="ECO:0000318"/>
    <property type="project" value="GO_Central"/>
</dbReference>
<dbReference type="GO" id="GO:0005516">
    <property type="term" value="F:calmodulin binding"/>
    <property type="evidence" value="ECO:0000318"/>
    <property type="project" value="GO_Central"/>
</dbReference>
<dbReference type="GO" id="GO:0106310">
    <property type="term" value="F:protein serine kinase activity"/>
    <property type="evidence" value="ECO:0007669"/>
    <property type="project" value="RHEA"/>
</dbReference>
<dbReference type="GO" id="GO:0035556">
    <property type="term" value="P:intracellular signal transduction"/>
    <property type="evidence" value="ECO:0000318"/>
    <property type="project" value="GO_Central"/>
</dbReference>
<dbReference type="CDD" id="cd00051">
    <property type="entry name" value="EFh"/>
    <property type="match status" value="1"/>
</dbReference>
<dbReference type="CDD" id="cd05117">
    <property type="entry name" value="STKc_CAMK"/>
    <property type="match status" value="1"/>
</dbReference>
<dbReference type="FunFam" id="1.10.238.10:FF:000015">
    <property type="entry name" value="Calcium-dependent protein kinase 1"/>
    <property type="match status" value="1"/>
</dbReference>
<dbReference type="FunFam" id="3.30.200.20:FF:000004">
    <property type="entry name" value="Calcium-dependent protein kinase 1"/>
    <property type="match status" value="1"/>
</dbReference>
<dbReference type="FunFam" id="1.10.510.10:FF:000178">
    <property type="entry name" value="Calcium-dependent protein kinase 5"/>
    <property type="match status" value="1"/>
</dbReference>
<dbReference type="Gene3D" id="1.10.238.10">
    <property type="entry name" value="EF-hand"/>
    <property type="match status" value="1"/>
</dbReference>
<dbReference type="Gene3D" id="3.30.200.20">
    <property type="entry name" value="Phosphorylase Kinase, domain 1"/>
    <property type="match status" value="1"/>
</dbReference>
<dbReference type="Gene3D" id="1.10.510.10">
    <property type="entry name" value="Transferase(Phosphotransferase) domain 1"/>
    <property type="match status" value="1"/>
</dbReference>
<dbReference type="InterPro" id="IPR050205">
    <property type="entry name" value="CDPK_Ser/Thr_kinases"/>
</dbReference>
<dbReference type="InterPro" id="IPR011992">
    <property type="entry name" value="EF-hand-dom_pair"/>
</dbReference>
<dbReference type="InterPro" id="IPR018247">
    <property type="entry name" value="EF_Hand_1_Ca_BS"/>
</dbReference>
<dbReference type="InterPro" id="IPR002048">
    <property type="entry name" value="EF_hand_dom"/>
</dbReference>
<dbReference type="InterPro" id="IPR011009">
    <property type="entry name" value="Kinase-like_dom_sf"/>
</dbReference>
<dbReference type="InterPro" id="IPR000719">
    <property type="entry name" value="Prot_kinase_dom"/>
</dbReference>
<dbReference type="InterPro" id="IPR017441">
    <property type="entry name" value="Protein_kinase_ATP_BS"/>
</dbReference>
<dbReference type="InterPro" id="IPR008271">
    <property type="entry name" value="Ser/Thr_kinase_AS"/>
</dbReference>
<dbReference type="PANTHER" id="PTHR24349">
    <property type="entry name" value="SERINE/THREONINE-PROTEIN KINASE"/>
    <property type="match status" value="1"/>
</dbReference>
<dbReference type="Pfam" id="PF13499">
    <property type="entry name" value="EF-hand_7"/>
    <property type="match status" value="2"/>
</dbReference>
<dbReference type="Pfam" id="PF00069">
    <property type="entry name" value="Pkinase"/>
    <property type="match status" value="1"/>
</dbReference>
<dbReference type="SMART" id="SM00054">
    <property type="entry name" value="EFh"/>
    <property type="match status" value="4"/>
</dbReference>
<dbReference type="SMART" id="SM00220">
    <property type="entry name" value="S_TKc"/>
    <property type="match status" value="1"/>
</dbReference>
<dbReference type="SUPFAM" id="SSF47473">
    <property type="entry name" value="EF-hand"/>
    <property type="match status" value="1"/>
</dbReference>
<dbReference type="SUPFAM" id="SSF56112">
    <property type="entry name" value="Protein kinase-like (PK-like)"/>
    <property type="match status" value="1"/>
</dbReference>
<dbReference type="PROSITE" id="PS00018">
    <property type="entry name" value="EF_HAND_1"/>
    <property type="match status" value="4"/>
</dbReference>
<dbReference type="PROSITE" id="PS50222">
    <property type="entry name" value="EF_HAND_2"/>
    <property type="match status" value="4"/>
</dbReference>
<dbReference type="PROSITE" id="PS00107">
    <property type="entry name" value="PROTEIN_KINASE_ATP"/>
    <property type="match status" value="1"/>
</dbReference>
<dbReference type="PROSITE" id="PS50011">
    <property type="entry name" value="PROTEIN_KINASE_DOM"/>
    <property type="match status" value="1"/>
</dbReference>
<dbReference type="PROSITE" id="PS00108">
    <property type="entry name" value="PROTEIN_KINASE_ST"/>
    <property type="match status" value="1"/>
</dbReference>
<reference key="1">
    <citation type="journal article" date="2005" name="Nature">
        <title>The map-based sequence of the rice genome.</title>
        <authorList>
            <consortium name="International rice genome sequencing project (IRGSP)"/>
        </authorList>
    </citation>
    <scope>NUCLEOTIDE SEQUENCE [LARGE SCALE GENOMIC DNA]</scope>
    <source>
        <strain>cv. Nipponbare</strain>
    </source>
</reference>
<reference key="2">
    <citation type="journal article" date="2008" name="Nucleic Acids Res.">
        <title>The rice annotation project database (RAP-DB): 2008 update.</title>
        <authorList>
            <consortium name="The rice annotation project (RAP)"/>
        </authorList>
    </citation>
    <scope>GENOME REANNOTATION</scope>
    <source>
        <strain>cv. Nipponbare</strain>
    </source>
</reference>
<reference key="3">
    <citation type="journal article" date="2013" name="Rice">
        <title>Improvement of the Oryza sativa Nipponbare reference genome using next generation sequence and optical map data.</title>
        <authorList>
            <person name="Kawahara Y."/>
            <person name="de la Bastide M."/>
            <person name="Hamilton J.P."/>
            <person name="Kanamori H."/>
            <person name="McCombie W.R."/>
            <person name="Ouyang S."/>
            <person name="Schwartz D.C."/>
            <person name="Tanaka T."/>
            <person name="Wu J."/>
            <person name="Zhou S."/>
            <person name="Childs K.L."/>
            <person name="Davidson R.M."/>
            <person name="Lin H."/>
            <person name="Quesada-Ocampo L."/>
            <person name="Vaillancourt B."/>
            <person name="Sakai H."/>
            <person name="Lee S.S."/>
            <person name="Kim J."/>
            <person name="Numa H."/>
            <person name="Itoh T."/>
            <person name="Buell C.R."/>
            <person name="Matsumoto T."/>
        </authorList>
    </citation>
    <scope>GENOME REANNOTATION</scope>
    <source>
        <strain>cv. Nipponbare</strain>
    </source>
</reference>
<reference key="4">
    <citation type="journal article" date="2005" name="Plant Cell Physiol.">
        <title>Genome-wide identification of the rice calcium-dependent protein kinase and its closely related kinase gene families: comprehensive analysis of the CDPKs gene family in rice.</title>
        <authorList>
            <person name="Asano T."/>
            <person name="Tanaka N."/>
            <person name="Yang G."/>
            <person name="Hayashi N."/>
            <person name="Komatsu S."/>
        </authorList>
    </citation>
    <scope>GENE FAMILY</scope>
    <scope>NOMENCLATURE</scope>
</reference>
<comment type="function">
    <text evidence="1">May play a role in signal transduction pathways that involve calcium as a second messenger.</text>
</comment>
<comment type="catalytic activity">
    <reaction evidence="7">
        <text>L-seryl-[protein] + ATP = O-phospho-L-seryl-[protein] + ADP + H(+)</text>
        <dbReference type="Rhea" id="RHEA:17989"/>
        <dbReference type="Rhea" id="RHEA-COMP:9863"/>
        <dbReference type="Rhea" id="RHEA-COMP:11604"/>
        <dbReference type="ChEBI" id="CHEBI:15378"/>
        <dbReference type="ChEBI" id="CHEBI:29999"/>
        <dbReference type="ChEBI" id="CHEBI:30616"/>
        <dbReference type="ChEBI" id="CHEBI:83421"/>
        <dbReference type="ChEBI" id="CHEBI:456216"/>
        <dbReference type="EC" id="2.7.11.1"/>
    </reaction>
</comment>
<comment type="catalytic activity">
    <reaction evidence="7">
        <text>L-threonyl-[protein] + ATP = O-phospho-L-threonyl-[protein] + ADP + H(+)</text>
        <dbReference type="Rhea" id="RHEA:46608"/>
        <dbReference type="Rhea" id="RHEA-COMP:11060"/>
        <dbReference type="Rhea" id="RHEA-COMP:11605"/>
        <dbReference type="ChEBI" id="CHEBI:15378"/>
        <dbReference type="ChEBI" id="CHEBI:30013"/>
        <dbReference type="ChEBI" id="CHEBI:30616"/>
        <dbReference type="ChEBI" id="CHEBI:61977"/>
        <dbReference type="ChEBI" id="CHEBI:456216"/>
        <dbReference type="EC" id="2.7.11.1"/>
    </reaction>
</comment>
<comment type="activity regulation">
    <text evidence="1">Activated by calcium. Autophosphorylation may play an important role in the regulation of the kinase activity.</text>
</comment>
<comment type="subcellular location">
    <subcellularLocation>
        <location evidence="7">Membrane</location>
        <topology evidence="7">Lipid-anchor</topology>
    </subcellularLocation>
</comment>
<comment type="domain">
    <text evidence="1">There are 3 contiguous domains conserved in the CDPK subfamily: a kinase domain, an autoinhibitory (junction) domain and a calmodulin-like domain. The autoinhibitory domain (356-386) inactivates kinase activity under calcium-free conditions.</text>
</comment>
<comment type="similarity">
    <text evidence="7">Belongs to the protein kinase superfamily. Ser/Thr protein kinase family. CDPK subfamily.</text>
</comment>
<keyword id="KW-0067">ATP-binding</keyword>
<keyword id="KW-0106">Calcium</keyword>
<keyword id="KW-0418">Kinase</keyword>
<keyword id="KW-0449">Lipoprotein</keyword>
<keyword id="KW-0472">Membrane</keyword>
<keyword id="KW-0479">Metal-binding</keyword>
<keyword id="KW-0519">Myristate</keyword>
<keyword id="KW-0547">Nucleotide-binding</keyword>
<keyword id="KW-1185">Reference proteome</keyword>
<keyword id="KW-0677">Repeat</keyword>
<keyword id="KW-0723">Serine/threonine-protein kinase</keyword>
<keyword id="KW-0808">Transferase</keyword>
<feature type="initiator methionine" description="Removed" evidence="2">
    <location>
        <position position="1"/>
    </location>
</feature>
<feature type="chain" id="PRO_0000437550" description="Calcium-dependent protein kinase 5">
    <location>
        <begin position="2"/>
        <end position="549"/>
    </location>
</feature>
<feature type="domain" description="Protein kinase" evidence="3">
    <location>
        <begin position="92"/>
        <end position="350"/>
    </location>
</feature>
<feature type="domain" description="EF-hand 1" evidence="4">
    <location>
        <begin position="393"/>
        <end position="428"/>
    </location>
</feature>
<feature type="domain" description="EF-hand 2" evidence="4">
    <location>
        <begin position="429"/>
        <end position="464"/>
    </location>
</feature>
<feature type="domain" description="EF-hand 3" evidence="4">
    <location>
        <begin position="465"/>
        <end position="500"/>
    </location>
</feature>
<feature type="domain" description="EF-hand 4" evidence="4">
    <location>
        <begin position="501"/>
        <end position="534"/>
    </location>
</feature>
<feature type="region of interest" description="Disordered" evidence="5">
    <location>
        <begin position="43"/>
        <end position="69"/>
    </location>
</feature>
<feature type="region of interest" description="Autoinhibitory domain" evidence="1">
    <location>
        <begin position="356"/>
        <end position="386"/>
    </location>
</feature>
<feature type="compositionally biased region" description="Low complexity" evidence="5">
    <location>
        <begin position="52"/>
        <end position="64"/>
    </location>
</feature>
<feature type="active site" description="Proton acceptor" evidence="3">
    <location>
        <position position="216"/>
    </location>
</feature>
<feature type="binding site" evidence="3">
    <location>
        <begin position="98"/>
        <end position="106"/>
    </location>
    <ligand>
        <name>ATP</name>
        <dbReference type="ChEBI" id="CHEBI:30616"/>
    </ligand>
</feature>
<feature type="binding site" evidence="3">
    <location>
        <position position="121"/>
    </location>
    <ligand>
        <name>ATP</name>
        <dbReference type="ChEBI" id="CHEBI:30616"/>
    </ligand>
</feature>
<feature type="binding site" evidence="4">
    <location>
        <position position="406"/>
    </location>
    <ligand>
        <name>Ca(2+)</name>
        <dbReference type="ChEBI" id="CHEBI:29108"/>
        <label>1</label>
    </ligand>
</feature>
<feature type="binding site" evidence="4">
    <location>
        <position position="408"/>
    </location>
    <ligand>
        <name>Ca(2+)</name>
        <dbReference type="ChEBI" id="CHEBI:29108"/>
        <label>1</label>
    </ligand>
</feature>
<feature type="binding site" evidence="4">
    <location>
        <position position="410"/>
    </location>
    <ligand>
        <name>Ca(2+)</name>
        <dbReference type="ChEBI" id="CHEBI:29108"/>
        <label>1</label>
    </ligand>
</feature>
<feature type="binding site" evidence="4">
    <location>
        <position position="417"/>
    </location>
    <ligand>
        <name>Ca(2+)</name>
        <dbReference type="ChEBI" id="CHEBI:29108"/>
        <label>1</label>
    </ligand>
</feature>
<feature type="binding site" evidence="4">
    <location>
        <position position="442"/>
    </location>
    <ligand>
        <name>Ca(2+)</name>
        <dbReference type="ChEBI" id="CHEBI:29108"/>
        <label>2</label>
    </ligand>
</feature>
<feature type="binding site" evidence="4">
    <location>
        <position position="444"/>
    </location>
    <ligand>
        <name>Ca(2+)</name>
        <dbReference type="ChEBI" id="CHEBI:29108"/>
        <label>2</label>
    </ligand>
</feature>
<feature type="binding site" evidence="4">
    <location>
        <position position="446"/>
    </location>
    <ligand>
        <name>Ca(2+)</name>
        <dbReference type="ChEBI" id="CHEBI:29108"/>
        <label>2</label>
    </ligand>
</feature>
<feature type="binding site" evidence="4">
    <location>
        <position position="448"/>
    </location>
    <ligand>
        <name>Ca(2+)</name>
        <dbReference type="ChEBI" id="CHEBI:29108"/>
        <label>2</label>
    </ligand>
</feature>
<feature type="binding site" evidence="4">
    <location>
        <position position="453"/>
    </location>
    <ligand>
        <name>Ca(2+)</name>
        <dbReference type="ChEBI" id="CHEBI:29108"/>
        <label>2</label>
    </ligand>
</feature>
<feature type="binding site" evidence="4">
    <location>
        <position position="478"/>
    </location>
    <ligand>
        <name>Ca(2+)</name>
        <dbReference type="ChEBI" id="CHEBI:29108"/>
        <label>3</label>
    </ligand>
</feature>
<feature type="binding site" evidence="4">
    <location>
        <position position="480"/>
    </location>
    <ligand>
        <name>Ca(2+)</name>
        <dbReference type="ChEBI" id="CHEBI:29108"/>
        <label>3</label>
    </ligand>
</feature>
<feature type="binding site" evidence="4">
    <location>
        <position position="482"/>
    </location>
    <ligand>
        <name>Ca(2+)</name>
        <dbReference type="ChEBI" id="CHEBI:29108"/>
        <label>3</label>
    </ligand>
</feature>
<feature type="binding site" evidence="4">
    <location>
        <position position="484"/>
    </location>
    <ligand>
        <name>Ca(2+)</name>
        <dbReference type="ChEBI" id="CHEBI:29108"/>
        <label>3</label>
    </ligand>
</feature>
<feature type="binding site" evidence="4">
    <location>
        <position position="489"/>
    </location>
    <ligand>
        <name>Ca(2+)</name>
        <dbReference type="ChEBI" id="CHEBI:29108"/>
        <label>3</label>
    </ligand>
</feature>
<feature type="binding site" evidence="4">
    <location>
        <position position="512"/>
    </location>
    <ligand>
        <name>Ca(2+)</name>
        <dbReference type="ChEBI" id="CHEBI:29108"/>
        <label>4</label>
    </ligand>
</feature>
<feature type="binding site" evidence="4">
    <location>
        <position position="514"/>
    </location>
    <ligand>
        <name>Ca(2+)</name>
        <dbReference type="ChEBI" id="CHEBI:29108"/>
        <label>4</label>
    </ligand>
</feature>
<feature type="binding site" evidence="4">
    <location>
        <position position="516"/>
    </location>
    <ligand>
        <name>Ca(2+)</name>
        <dbReference type="ChEBI" id="CHEBI:29108"/>
        <label>4</label>
    </ligand>
</feature>
<feature type="binding site" evidence="4">
    <location>
        <position position="518"/>
    </location>
    <ligand>
        <name>Ca(2+)</name>
        <dbReference type="ChEBI" id="CHEBI:29108"/>
        <label>4</label>
    </ligand>
</feature>
<feature type="binding site" evidence="4">
    <location>
        <position position="523"/>
    </location>
    <ligand>
        <name>Ca(2+)</name>
        <dbReference type="ChEBI" id="CHEBI:29108"/>
        <label>4</label>
    </ligand>
</feature>
<feature type="lipid moiety-binding region" description="N-myristoyl glycine" evidence="2">
    <location>
        <position position="2"/>
    </location>
</feature>